<proteinExistence type="evidence at protein level"/>
<feature type="chain" id="PRO_0000212654" description="Cdc42 effector protein 5">
    <location>
        <begin position="1"/>
        <end position="150"/>
    </location>
</feature>
<feature type="domain" description="CRIB" evidence="1">
    <location>
        <begin position="23"/>
        <end position="37"/>
    </location>
</feature>
<feature type="region of interest" description="Disordered" evidence="2">
    <location>
        <begin position="1"/>
        <end position="20"/>
    </location>
</feature>
<feature type="region of interest" description="Disordered" evidence="2">
    <location>
        <begin position="34"/>
        <end position="89"/>
    </location>
</feature>
<feature type="region of interest" description="Disordered" evidence="2">
    <location>
        <begin position="114"/>
        <end position="133"/>
    </location>
</feature>
<feature type="compositionally biased region" description="Pro residues" evidence="2">
    <location>
        <begin position="55"/>
        <end position="66"/>
    </location>
</feature>
<feature type="compositionally biased region" description="Pro residues" evidence="2">
    <location>
        <begin position="74"/>
        <end position="87"/>
    </location>
</feature>
<feature type="compositionally biased region" description="Basic and acidic residues" evidence="2">
    <location>
        <begin position="114"/>
        <end position="127"/>
    </location>
</feature>
<feature type="modified residue" description="Omega-N-methylarginine" evidence="7">
    <location>
        <position position="38"/>
    </location>
</feature>
<feature type="mutagenesis site" description="No binding with CDC42." evidence="3">
    <original>IS</original>
    <variation>AA</variation>
    <location>
        <begin position="23"/>
        <end position="24"/>
    </location>
</feature>
<feature type="sequence conflict" description="In Ref. 2; AAD17906." evidence="6" ref="2">
    <original>A</original>
    <variation>R</variation>
    <location>
        <position position="20"/>
    </location>
</feature>
<sequence length="150" mass="15545">MPVMKQLGPAQPKKRLDRGALSISAPLGDFRHTLHVGRGGDAFGDTSFLSRHGGGPPPEPGAPPVVAPHSVAPPAAPQPPVAVPSPADPLLSFHLDLGPSMLDAVLGVMDAERSETTATKPDGDAHPRVQHPKTRCCSNADLQLDDVIGL</sequence>
<reference key="1">
    <citation type="journal article" date="1999" name="Mol. Cell. Biol.">
        <title>The Borgs, a new family of Cdc42 and TC10 GTPase-interacting proteins.</title>
        <authorList>
            <person name="Joberty G."/>
            <person name="Perlungher R.R."/>
            <person name="Macara I.G."/>
        </authorList>
    </citation>
    <scope>NUCLEOTIDE SEQUENCE [MRNA]</scope>
    <scope>FUNCTION</scope>
    <scope>INTERACTION WITH CDC42</scope>
    <scope>MUTAGENESIS OF 23-ILE-SER-24</scope>
    <scope>TISSUE SPECIFICITY</scope>
    <source>
        <tissue>Embryo</tissue>
    </source>
</reference>
<reference key="2">
    <citation type="journal article" date="2001" name="J. Biol. Chem.">
        <title>A new family of Cdc42 effector proteins, CEPs, function in fibroblast and epithelial cell shape changes.</title>
        <authorList>
            <person name="Hirsch D.S."/>
            <person name="Pirone D.M."/>
            <person name="Burbelo P.D."/>
        </authorList>
    </citation>
    <scope>NUCLEOTIDE SEQUENCE [MRNA]</scope>
    <scope>FUNCTION</scope>
    <scope>SUBCELLULAR LOCATION</scope>
    <scope>INTERACTION WITH CDC42</scope>
</reference>
<reference key="3">
    <citation type="journal article" date="2005" name="Science">
        <title>The transcriptional landscape of the mammalian genome.</title>
        <authorList>
            <person name="Carninci P."/>
            <person name="Kasukawa T."/>
            <person name="Katayama S."/>
            <person name="Gough J."/>
            <person name="Frith M.C."/>
            <person name="Maeda N."/>
            <person name="Oyama R."/>
            <person name="Ravasi T."/>
            <person name="Lenhard B."/>
            <person name="Wells C."/>
            <person name="Kodzius R."/>
            <person name="Shimokawa K."/>
            <person name="Bajic V.B."/>
            <person name="Brenner S.E."/>
            <person name="Batalov S."/>
            <person name="Forrest A.R."/>
            <person name="Zavolan M."/>
            <person name="Davis M.J."/>
            <person name="Wilming L.G."/>
            <person name="Aidinis V."/>
            <person name="Allen J.E."/>
            <person name="Ambesi-Impiombato A."/>
            <person name="Apweiler R."/>
            <person name="Aturaliya R.N."/>
            <person name="Bailey T.L."/>
            <person name="Bansal M."/>
            <person name="Baxter L."/>
            <person name="Beisel K.W."/>
            <person name="Bersano T."/>
            <person name="Bono H."/>
            <person name="Chalk A.M."/>
            <person name="Chiu K.P."/>
            <person name="Choudhary V."/>
            <person name="Christoffels A."/>
            <person name="Clutterbuck D.R."/>
            <person name="Crowe M.L."/>
            <person name="Dalla E."/>
            <person name="Dalrymple B.P."/>
            <person name="de Bono B."/>
            <person name="Della Gatta G."/>
            <person name="di Bernardo D."/>
            <person name="Down T."/>
            <person name="Engstrom P."/>
            <person name="Fagiolini M."/>
            <person name="Faulkner G."/>
            <person name="Fletcher C.F."/>
            <person name="Fukushima T."/>
            <person name="Furuno M."/>
            <person name="Futaki S."/>
            <person name="Gariboldi M."/>
            <person name="Georgii-Hemming P."/>
            <person name="Gingeras T.R."/>
            <person name="Gojobori T."/>
            <person name="Green R.E."/>
            <person name="Gustincich S."/>
            <person name="Harbers M."/>
            <person name="Hayashi Y."/>
            <person name="Hensch T.K."/>
            <person name="Hirokawa N."/>
            <person name="Hill D."/>
            <person name="Huminiecki L."/>
            <person name="Iacono M."/>
            <person name="Ikeo K."/>
            <person name="Iwama A."/>
            <person name="Ishikawa T."/>
            <person name="Jakt M."/>
            <person name="Kanapin A."/>
            <person name="Katoh M."/>
            <person name="Kawasawa Y."/>
            <person name="Kelso J."/>
            <person name="Kitamura H."/>
            <person name="Kitano H."/>
            <person name="Kollias G."/>
            <person name="Krishnan S.P."/>
            <person name="Kruger A."/>
            <person name="Kummerfeld S.K."/>
            <person name="Kurochkin I.V."/>
            <person name="Lareau L.F."/>
            <person name="Lazarevic D."/>
            <person name="Lipovich L."/>
            <person name="Liu J."/>
            <person name="Liuni S."/>
            <person name="McWilliam S."/>
            <person name="Madan Babu M."/>
            <person name="Madera M."/>
            <person name="Marchionni L."/>
            <person name="Matsuda H."/>
            <person name="Matsuzawa S."/>
            <person name="Miki H."/>
            <person name="Mignone F."/>
            <person name="Miyake S."/>
            <person name="Morris K."/>
            <person name="Mottagui-Tabar S."/>
            <person name="Mulder N."/>
            <person name="Nakano N."/>
            <person name="Nakauchi H."/>
            <person name="Ng P."/>
            <person name="Nilsson R."/>
            <person name="Nishiguchi S."/>
            <person name="Nishikawa S."/>
            <person name="Nori F."/>
            <person name="Ohara O."/>
            <person name="Okazaki Y."/>
            <person name="Orlando V."/>
            <person name="Pang K.C."/>
            <person name="Pavan W.J."/>
            <person name="Pavesi G."/>
            <person name="Pesole G."/>
            <person name="Petrovsky N."/>
            <person name="Piazza S."/>
            <person name="Reed J."/>
            <person name="Reid J.F."/>
            <person name="Ring B.Z."/>
            <person name="Ringwald M."/>
            <person name="Rost B."/>
            <person name="Ruan Y."/>
            <person name="Salzberg S.L."/>
            <person name="Sandelin A."/>
            <person name="Schneider C."/>
            <person name="Schoenbach C."/>
            <person name="Sekiguchi K."/>
            <person name="Semple C.A."/>
            <person name="Seno S."/>
            <person name="Sessa L."/>
            <person name="Sheng Y."/>
            <person name="Shibata Y."/>
            <person name="Shimada H."/>
            <person name="Shimada K."/>
            <person name="Silva D."/>
            <person name="Sinclair B."/>
            <person name="Sperling S."/>
            <person name="Stupka E."/>
            <person name="Sugiura K."/>
            <person name="Sultana R."/>
            <person name="Takenaka Y."/>
            <person name="Taki K."/>
            <person name="Tammoja K."/>
            <person name="Tan S.L."/>
            <person name="Tang S."/>
            <person name="Taylor M.S."/>
            <person name="Tegner J."/>
            <person name="Teichmann S.A."/>
            <person name="Ueda H.R."/>
            <person name="van Nimwegen E."/>
            <person name="Verardo R."/>
            <person name="Wei C.L."/>
            <person name="Yagi K."/>
            <person name="Yamanishi H."/>
            <person name="Zabarovsky E."/>
            <person name="Zhu S."/>
            <person name="Zimmer A."/>
            <person name="Hide W."/>
            <person name="Bult C."/>
            <person name="Grimmond S.M."/>
            <person name="Teasdale R.D."/>
            <person name="Liu E.T."/>
            <person name="Brusic V."/>
            <person name="Quackenbush J."/>
            <person name="Wahlestedt C."/>
            <person name="Mattick J.S."/>
            <person name="Hume D.A."/>
            <person name="Kai C."/>
            <person name="Sasaki D."/>
            <person name="Tomaru Y."/>
            <person name="Fukuda S."/>
            <person name="Kanamori-Katayama M."/>
            <person name="Suzuki M."/>
            <person name="Aoki J."/>
            <person name="Arakawa T."/>
            <person name="Iida J."/>
            <person name="Imamura K."/>
            <person name="Itoh M."/>
            <person name="Kato T."/>
            <person name="Kawaji H."/>
            <person name="Kawagashira N."/>
            <person name="Kawashima T."/>
            <person name="Kojima M."/>
            <person name="Kondo S."/>
            <person name="Konno H."/>
            <person name="Nakano K."/>
            <person name="Ninomiya N."/>
            <person name="Nishio T."/>
            <person name="Okada M."/>
            <person name="Plessy C."/>
            <person name="Shibata K."/>
            <person name="Shiraki T."/>
            <person name="Suzuki S."/>
            <person name="Tagami M."/>
            <person name="Waki K."/>
            <person name="Watahiki A."/>
            <person name="Okamura-Oho Y."/>
            <person name="Suzuki H."/>
            <person name="Kawai J."/>
            <person name="Hayashizaki Y."/>
        </authorList>
    </citation>
    <scope>NUCLEOTIDE SEQUENCE [LARGE SCALE MRNA]</scope>
    <source>
        <strain>C57BL/6J</strain>
        <tissue>Small intestine</tissue>
    </source>
</reference>
<reference key="4">
    <citation type="journal article" date="2004" name="Genome Res.">
        <title>The status, quality, and expansion of the NIH full-length cDNA project: the Mammalian Gene Collection (MGC).</title>
        <authorList>
            <consortium name="The MGC Project Team"/>
        </authorList>
    </citation>
    <scope>NUCLEOTIDE SEQUENCE [LARGE SCALE MRNA]</scope>
    <source>
        <strain>FVB/N</strain>
        <tissue>Colon</tissue>
        <tissue>Mammary tumor</tissue>
    </source>
</reference>
<reference key="5">
    <citation type="journal article" date="2001" name="Nat. Cell Biol.">
        <title>Borg proteins control septin organization and are negatively regulated by Cdc42.</title>
        <authorList>
            <person name="Joberty G."/>
            <person name="Perlungher R.R."/>
            <person name="Sheffield P.J."/>
            <person name="Kinoshita M."/>
            <person name="Noda M."/>
            <person name="Haystead T."/>
            <person name="Macara I.G."/>
        </authorList>
    </citation>
    <scope>FUNCTION</scope>
    <scope>INTERACTION WITH SEPT7</scope>
</reference>
<reference key="6">
    <citation type="journal article" date="2014" name="Mol. Cell. Proteomics">
        <title>Immunoaffinity enrichment and mass spectrometry analysis of protein methylation.</title>
        <authorList>
            <person name="Guo A."/>
            <person name="Gu H."/>
            <person name="Zhou J."/>
            <person name="Mulhern D."/>
            <person name="Wang Y."/>
            <person name="Lee K.A."/>
            <person name="Yang V."/>
            <person name="Aguiar M."/>
            <person name="Kornhauser J."/>
            <person name="Jia X."/>
            <person name="Ren J."/>
            <person name="Beausoleil S.A."/>
            <person name="Silva J.C."/>
            <person name="Vemulapalli V."/>
            <person name="Bedford M.T."/>
            <person name="Comb M.J."/>
        </authorList>
    </citation>
    <scope>METHYLATION [LARGE SCALE ANALYSIS] AT ARG-38</scope>
    <scope>IDENTIFICATION BY MASS SPECTROMETRY [LARGE SCALE ANALYSIS]</scope>
    <source>
        <tissue>Embryo</tissue>
    </source>
</reference>
<organism>
    <name type="scientific">Mus musculus</name>
    <name type="common">Mouse</name>
    <dbReference type="NCBI Taxonomy" id="10090"/>
    <lineage>
        <taxon>Eukaryota</taxon>
        <taxon>Metazoa</taxon>
        <taxon>Chordata</taxon>
        <taxon>Craniata</taxon>
        <taxon>Vertebrata</taxon>
        <taxon>Euteleostomi</taxon>
        <taxon>Mammalia</taxon>
        <taxon>Eutheria</taxon>
        <taxon>Euarchontoglires</taxon>
        <taxon>Glires</taxon>
        <taxon>Rodentia</taxon>
        <taxon>Myomorpha</taxon>
        <taxon>Muroidea</taxon>
        <taxon>Muridae</taxon>
        <taxon>Murinae</taxon>
        <taxon>Mus</taxon>
        <taxon>Mus</taxon>
    </lineage>
</organism>
<protein>
    <recommendedName>
        <fullName>Cdc42 effector protein 5</fullName>
    </recommendedName>
    <alternativeName>
        <fullName>Binder of Rho GTPases 3</fullName>
    </alternativeName>
</protein>
<dbReference type="EMBL" id="AF164119">
    <property type="protein sequence ID" value="AAD48816.1"/>
    <property type="molecule type" value="mRNA"/>
</dbReference>
<dbReference type="EMBL" id="AF102773">
    <property type="protein sequence ID" value="AAD17906.1"/>
    <property type="molecule type" value="mRNA"/>
</dbReference>
<dbReference type="EMBL" id="AK008154">
    <property type="protein sequence ID" value="BAB25498.1"/>
    <property type="molecule type" value="mRNA"/>
</dbReference>
<dbReference type="EMBL" id="BC006758">
    <property type="protein sequence ID" value="AAH06758.1"/>
    <property type="molecule type" value="mRNA"/>
</dbReference>
<dbReference type="EMBL" id="BC103774">
    <property type="protein sequence ID" value="AAI03775.1"/>
    <property type="molecule type" value="mRNA"/>
</dbReference>
<dbReference type="CCDS" id="CCDS20733.1"/>
<dbReference type="RefSeq" id="NP_067429.1">
    <property type="nucleotide sequence ID" value="NM_021454.4"/>
</dbReference>
<dbReference type="RefSeq" id="XP_006540313.1">
    <property type="nucleotide sequence ID" value="XM_006540250.4"/>
</dbReference>
<dbReference type="FunCoup" id="Q9Z0X0">
    <property type="interactions" value="91"/>
</dbReference>
<dbReference type="STRING" id="10090.ENSMUSP00000092508"/>
<dbReference type="iPTMnet" id="Q9Z0X0"/>
<dbReference type="PhosphoSitePlus" id="Q9Z0X0"/>
<dbReference type="jPOST" id="Q9Z0X0"/>
<dbReference type="PaxDb" id="10090-ENSMUSP00000092508"/>
<dbReference type="PeptideAtlas" id="Q9Z0X0"/>
<dbReference type="ProteomicsDB" id="281700"/>
<dbReference type="Pumba" id="Q9Z0X0"/>
<dbReference type="Antibodypedia" id="50438">
    <property type="antibodies" value="79 antibodies from 23 providers"/>
</dbReference>
<dbReference type="Ensembl" id="ENSMUST00000076831.7">
    <property type="protein sequence ID" value="ENSMUSP00000092508.5"/>
    <property type="gene ID" value="ENSMUSG00000063838.7"/>
</dbReference>
<dbReference type="GeneID" id="58804"/>
<dbReference type="KEGG" id="mmu:58804"/>
<dbReference type="UCSC" id="uc009exe.1">
    <property type="organism name" value="mouse"/>
</dbReference>
<dbReference type="AGR" id="MGI:1929745"/>
<dbReference type="CTD" id="148170"/>
<dbReference type="MGI" id="MGI:1929745">
    <property type="gene designation" value="Cdc42ep5"/>
</dbReference>
<dbReference type="VEuPathDB" id="HostDB:ENSMUSG00000063838"/>
<dbReference type="eggNOG" id="ENOG502S9WH">
    <property type="taxonomic scope" value="Eukaryota"/>
</dbReference>
<dbReference type="GeneTree" id="ENSGT00940000162969"/>
<dbReference type="InParanoid" id="Q9Z0X0"/>
<dbReference type="OMA" id="HPRARCH"/>
<dbReference type="OrthoDB" id="8898624at2759"/>
<dbReference type="PhylomeDB" id="Q9Z0X0"/>
<dbReference type="TreeFam" id="TF331725"/>
<dbReference type="Reactome" id="R-MMU-5687128">
    <property type="pathway name" value="MAPK6/MAPK4 signaling"/>
</dbReference>
<dbReference type="BioGRID-ORCS" id="58804">
    <property type="hits" value="1 hit in 78 CRISPR screens"/>
</dbReference>
<dbReference type="ChiTaRS" id="Cdc42ep5">
    <property type="organism name" value="mouse"/>
</dbReference>
<dbReference type="PRO" id="PR:Q9Z0X0"/>
<dbReference type="Proteomes" id="UP000000589">
    <property type="component" value="Chromosome 7"/>
</dbReference>
<dbReference type="RNAct" id="Q9Z0X0">
    <property type="molecule type" value="protein"/>
</dbReference>
<dbReference type="Bgee" id="ENSMUSG00000063838">
    <property type="expression patterns" value="Expressed in intestinal villus and 204 other cell types or tissues"/>
</dbReference>
<dbReference type="ExpressionAtlas" id="Q9Z0X0">
    <property type="expression patterns" value="baseline and differential"/>
</dbReference>
<dbReference type="GO" id="GO:0005737">
    <property type="term" value="C:cytoplasm"/>
    <property type="evidence" value="ECO:0000314"/>
    <property type="project" value="MGI"/>
</dbReference>
<dbReference type="GO" id="GO:0005856">
    <property type="term" value="C:cytoskeleton"/>
    <property type="evidence" value="ECO:0007669"/>
    <property type="project" value="UniProtKB-SubCell"/>
</dbReference>
<dbReference type="GO" id="GO:0012505">
    <property type="term" value="C:endomembrane system"/>
    <property type="evidence" value="ECO:0007669"/>
    <property type="project" value="UniProtKB-SubCell"/>
</dbReference>
<dbReference type="GO" id="GO:0005886">
    <property type="term" value="C:plasma membrane"/>
    <property type="evidence" value="ECO:0000314"/>
    <property type="project" value="MGI"/>
</dbReference>
<dbReference type="GO" id="GO:0031267">
    <property type="term" value="F:small GTPase binding"/>
    <property type="evidence" value="ECO:0007669"/>
    <property type="project" value="Ensembl"/>
</dbReference>
<dbReference type="GO" id="GO:0007254">
    <property type="term" value="P:JNK cascade"/>
    <property type="evidence" value="ECO:0000314"/>
    <property type="project" value="MGI"/>
</dbReference>
<dbReference type="GO" id="GO:0030838">
    <property type="term" value="P:positive regulation of actin filament polymerization"/>
    <property type="evidence" value="ECO:0007669"/>
    <property type="project" value="Ensembl"/>
</dbReference>
<dbReference type="GO" id="GO:0031274">
    <property type="term" value="P:positive regulation of pseudopodium assembly"/>
    <property type="evidence" value="ECO:0007669"/>
    <property type="project" value="Ensembl"/>
</dbReference>
<dbReference type="GO" id="GO:0008360">
    <property type="term" value="P:regulation of cell shape"/>
    <property type="evidence" value="ECO:0007669"/>
    <property type="project" value="UniProtKB-KW"/>
</dbReference>
<dbReference type="GO" id="GO:0007266">
    <property type="term" value="P:Rho protein signal transduction"/>
    <property type="evidence" value="ECO:0000314"/>
    <property type="project" value="MGI"/>
</dbReference>
<dbReference type="InterPro" id="IPR029273">
    <property type="entry name" value="Cdc42_effect-like"/>
</dbReference>
<dbReference type="InterPro" id="IPR051296">
    <property type="entry name" value="Cdc42_Effector_BORG/CEP"/>
</dbReference>
<dbReference type="InterPro" id="IPR000095">
    <property type="entry name" value="CRIB_dom"/>
</dbReference>
<dbReference type="PANTHER" id="PTHR15344:SF15">
    <property type="entry name" value="CDC42 EFFECTOR PROTEIN 5"/>
    <property type="match status" value="1"/>
</dbReference>
<dbReference type="PANTHER" id="PTHR15344">
    <property type="entry name" value="CDC42 EFFECTOR PROTEIN BORG"/>
    <property type="match status" value="1"/>
</dbReference>
<dbReference type="Pfam" id="PF14957">
    <property type="entry name" value="BORG_CEP"/>
    <property type="match status" value="1"/>
</dbReference>
<dbReference type="Pfam" id="PF00786">
    <property type="entry name" value="PBD"/>
    <property type="match status" value="1"/>
</dbReference>
<dbReference type="SMART" id="SM00285">
    <property type="entry name" value="PBD"/>
    <property type="match status" value="1"/>
</dbReference>
<dbReference type="PROSITE" id="PS50108">
    <property type="entry name" value="CRIB"/>
    <property type="match status" value="1"/>
</dbReference>
<accession>Q9Z0X0</accession>
<accession>Q3SYK1</accession>
<accession>Q9QZT9</accession>
<keyword id="KW-0133">Cell shape</keyword>
<keyword id="KW-0963">Cytoplasm</keyword>
<keyword id="KW-0206">Cytoskeleton</keyword>
<keyword id="KW-0472">Membrane</keyword>
<keyword id="KW-0488">Methylation</keyword>
<keyword id="KW-1185">Reference proteome</keyword>
<name>BORG3_MOUSE</name>
<evidence type="ECO:0000255" key="1">
    <source>
        <dbReference type="PROSITE-ProRule" id="PRU00057"/>
    </source>
</evidence>
<evidence type="ECO:0000256" key="2">
    <source>
        <dbReference type="SAM" id="MobiDB-lite"/>
    </source>
</evidence>
<evidence type="ECO:0000269" key="3">
    <source>
    </source>
</evidence>
<evidence type="ECO:0000269" key="4">
    <source>
    </source>
</evidence>
<evidence type="ECO:0000269" key="5">
    <source>
    </source>
</evidence>
<evidence type="ECO:0000305" key="6"/>
<evidence type="ECO:0007744" key="7">
    <source>
    </source>
</evidence>
<gene>
    <name type="primary">Cdc42ep5</name>
    <name type="synonym">Borg3</name>
    <name type="synonym">Cep5</name>
</gene>
<comment type="function">
    <text evidence="3 4 5">Probably involved in the organization of the actin cytoskeleton. May act downstream of CDC42 to induce actin filament assembly leading to cell shape changes. Induces pseudopodia formation in fibroblasts. Inhibits MAPK8 independently of CDC42 binding. Controls septin organization and this effect is negatively regulated by CDC42.</text>
</comment>
<comment type="subunit">
    <text evidence="3 4 5">Interacts with CDC42 in a GTP-dependent manner, and with SEPT7.</text>
</comment>
<comment type="subcellular location">
    <subcellularLocation>
        <location evidence="4">Endomembrane system</location>
        <topology evidence="4">Peripheral membrane protein</topology>
    </subcellularLocation>
    <subcellularLocation>
        <location evidence="4">Cytoplasm</location>
        <location evidence="4">Cytoskeleton</location>
    </subcellularLocation>
</comment>
<comment type="tissue specificity">
    <text evidence="3">Highly expressed in the skeletal muscle.</text>
</comment>
<comment type="domain">
    <text>The CRIB domain mediates interaction with CDC42.</text>
</comment>
<comment type="similarity">
    <text evidence="6">Belongs to the BORG/CEP family.</text>
</comment>